<accession>B2SDW6</accession>
<sequence length="143" mass="15088">MKLNTLAPAAGSKSAPKRLGRGIGSGLGKTSGKGHKGQKARSGGYHKVGFEGGQMPLQRRLPKFGFTSASKRHVAEIRLHELNNLVADEVTLDTLKDFGLIRKDIKTVKVIASGEIQKAVSLKGIACTKGAKEAIEKAGGKVE</sequence>
<organism>
    <name type="scientific">Francisella tularensis subsp. mediasiatica (strain FSC147)</name>
    <dbReference type="NCBI Taxonomy" id="441952"/>
    <lineage>
        <taxon>Bacteria</taxon>
        <taxon>Pseudomonadati</taxon>
        <taxon>Pseudomonadota</taxon>
        <taxon>Gammaproteobacteria</taxon>
        <taxon>Thiotrichales</taxon>
        <taxon>Francisellaceae</taxon>
        <taxon>Francisella</taxon>
    </lineage>
</organism>
<dbReference type="EMBL" id="CP000915">
    <property type="protein sequence ID" value="ACD31330.1"/>
    <property type="molecule type" value="Genomic_DNA"/>
</dbReference>
<dbReference type="SMR" id="B2SDW6"/>
<dbReference type="KEGG" id="ftm:FTM_1508"/>
<dbReference type="HOGENOM" id="CLU_055188_4_2_6"/>
<dbReference type="GO" id="GO:0022625">
    <property type="term" value="C:cytosolic large ribosomal subunit"/>
    <property type="evidence" value="ECO:0007669"/>
    <property type="project" value="TreeGrafter"/>
</dbReference>
<dbReference type="GO" id="GO:0019843">
    <property type="term" value="F:rRNA binding"/>
    <property type="evidence" value="ECO:0007669"/>
    <property type="project" value="UniProtKB-UniRule"/>
</dbReference>
<dbReference type="GO" id="GO:0003735">
    <property type="term" value="F:structural constituent of ribosome"/>
    <property type="evidence" value="ECO:0007669"/>
    <property type="project" value="InterPro"/>
</dbReference>
<dbReference type="GO" id="GO:0006412">
    <property type="term" value="P:translation"/>
    <property type="evidence" value="ECO:0007669"/>
    <property type="project" value="UniProtKB-UniRule"/>
</dbReference>
<dbReference type="Gene3D" id="3.100.10.10">
    <property type="match status" value="1"/>
</dbReference>
<dbReference type="HAMAP" id="MF_01341">
    <property type="entry name" value="Ribosomal_uL15"/>
    <property type="match status" value="1"/>
</dbReference>
<dbReference type="InterPro" id="IPR030878">
    <property type="entry name" value="Ribosomal_uL15"/>
</dbReference>
<dbReference type="InterPro" id="IPR021131">
    <property type="entry name" value="Ribosomal_uL15/eL18"/>
</dbReference>
<dbReference type="InterPro" id="IPR036227">
    <property type="entry name" value="Ribosomal_uL15/eL18_sf"/>
</dbReference>
<dbReference type="InterPro" id="IPR005749">
    <property type="entry name" value="Ribosomal_uL15_bac-type"/>
</dbReference>
<dbReference type="InterPro" id="IPR001196">
    <property type="entry name" value="Ribosomal_uL15_CS"/>
</dbReference>
<dbReference type="NCBIfam" id="TIGR01071">
    <property type="entry name" value="rplO_bact"/>
    <property type="match status" value="1"/>
</dbReference>
<dbReference type="PANTHER" id="PTHR12934">
    <property type="entry name" value="50S RIBOSOMAL PROTEIN L15"/>
    <property type="match status" value="1"/>
</dbReference>
<dbReference type="PANTHER" id="PTHR12934:SF11">
    <property type="entry name" value="LARGE RIBOSOMAL SUBUNIT PROTEIN UL15M"/>
    <property type="match status" value="1"/>
</dbReference>
<dbReference type="Pfam" id="PF00828">
    <property type="entry name" value="Ribosomal_L27A"/>
    <property type="match status" value="1"/>
</dbReference>
<dbReference type="SUPFAM" id="SSF52080">
    <property type="entry name" value="Ribosomal proteins L15p and L18e"/>
    <property type="match status" value="1"/>
</dbReference>
<dbReference type="PROSITE" id="PS00475">
    <property type="entry name" value="RIBOSOMAL_L15"/>
    <property type="match status" value="1"/>
</dbReference>
<evidence type="ECO:0000255" key="1">
    <source>
        <dbReference type="HAMAP-Rule" id="MF_01341"/>
    </source>
</evidence>
<evidence type="ECO:0000256" key="2">
    <source>
        <dbReference type="SAM" id="MobiDB-lite"/>
    </source>
</evidence>
<evidence type="ECO:0000305" key="3"/>
<keyword id="KW-0687">Ribonucleoprotein</keyword>
<keyword id="KW-0689">Ribosomal protein</keyword>
<keyword id="KW-0694">RNA-binding</keyword>
<keyword id="KW-0699">rRNA-binding</keyword>
<protein>
    <recommendedName>
        <fullName evidence="1">Large ribosomal subunit protein uL15</fullName>
    </recommendedName>
    <alternativeName>
        <fullName evidence="3">50S ribosomal protein L15</fullName>
    </alternativeName>
</protein>
<name>RL15_FRATM</name>
<proteinExistence type="inferred from homology"/>
<comment type="function">
    <text evidence="1">Binds to the 23S rRNA.</text>
</comment>
<comment type="subunit">
    <text evidence="1">Part of the 50S ribosomal subunit.</text>
</comment>
<comment type="similarity">
    <text evidence="1">Belongs to the universal ribosomal protein uL15 family.</text>
</comment>
<reference key="1">
    <citation type="journal article" date="2009" name="PLoS Pathog.">
        <title>Molecular evolutionary consequences of niche restriction in Francisella tularensis, a facultative intracellular pathogen.</title>
        <authorList>
            <person name="Larsson P."/>
            <person name="Elfsmark D."/>
            <person name="Svensson K."/>
            <person name="Wikstroem P."/>
            <person name="Forsman M."/>
            <person name="Brettin T."/>
            <person name="Keim P."/>
            <person name="Johansson A."/>
        </authorList>
    </citation>
    <scope>NUCLEOTIDE SEQUENCE [LARGE SCALE GENOMIC DNA]</scope>
    <source>
        <strain>FSC147</strain>
    </source>
</reference>
<gene>
    <name evidence="1" type="primary">rplO</name>
    <name type="ordered locus">FTM_1508</name>
</gene>
<feature type="chain" id="PRO_1000142823" description="Large ribosomal subunit protein uL15">
    <location>
        <begin position="1"/>
        <end position="143"/>
    </location>
</feature>
<feature type="region of interest" description="Disordered" evidence="2">
    <location>
        <begin position="1"/>
        <end position="52"/>
    </location>
</feature>
<feature type="compositionally biased region" description="Gly residues" evidence="2">
    <location>
        <begin position="21"/>
        <end position="31"/>
    </location>
</feature>